<evidence type="ECO:0000255" key="1">
    <source>
        <dbReference type="HAMAP-Rule" id="MF_01582"/>
    </source>
</evidence>
<comment type="function">
    <text evidence="1">Involved in the import of serine and threonine into the cell, with the concomitant import of sodium (symport system).</text>
</comment>
<comment type="catalytic activity">
    <reaction evidence="1">
        <text>L-serine(in) + Na(+)(in) = L-serine(out) + Na(+)(out)</text>
        <dbReference type="Rhea" id="RHEA:29575"/>
        <dbReference type="ChEBI" id="CHEBI:29101"/>
        <dbReference type="ChEBI" id="CHEBI:33384"/>
    </reaction>
    <physiologicalReaction direction="right-to-left" evidence="1">
        <dbReference type="Rhea" id="RHEA:29577"/>
    </physiologicalReaction>
</comment>
<comment type="catalytic activity">
    <reaction evidence="1">
        <text>L-threonine(in) + Na(+)(in) = L-threonine(out) + Na(+)(out)</text>
        <dbReference type="Rhea" id="RHEA:69999"/>
        <dbReference type="ChEBI" id="CHEBI:29101"/>
        <dbReference type="ChEBI" id="CHEBI:57926"/>
    </reaction>
    <physiologicalReaction direction="right-to-left" evidence="1">
        <dbReference type="Rhea" id="RHEA:70001"/>
    </physiologicalReaction>
</comment>
<comment type="subcellular location">
    <subcellularLocation>
        <location evidence="1">Cell inner membrane</location>
        <topology evidence="1">Multi-pass membrane protein</topology>
    </subcellularLocation>
</comment>
<comment type="similarity">
    <text evidence="1">Belongs to the dicarboxylate/amino acid:cation symporter (DAACS) (TC 2.A.23) family.</text>
</comment>
<reference key="1">
    <citation type="journal article" date="2004" name="Proc. Natl. Acad. Sci. U.S.A.">
        <title>Insights into the evolution of Yersinia pestis through whole-genome comparison with Yersinia pseudotuberculosis.</title>
        <authorList>
            <person name="Chain P.S.G."/>
            <person name="Carniel E."/>
            <person name="Larimer F.W."/>
            <person name="Lamerdin J."/>
            <person name="Stoutland P.O."/>
            <person name="Regala W.M."/>
            <person name="Georgescu A.M."/>
            <person name="Vergez L.M."/>
            <person name="Land M.L."/>
            <person name="Motin V.L."/>
            <person name="Brubaker R.R."/>
            <person name="Fowler J."/>
            <person name="Hinnebusch J."/>
            <person name="Marceau M."/>
            <person name="Medigue C."/>
            <person name="Simonet M."/>
            <person name="Chenal-Francisque V."/>
            <person name="Souza B."/>
            <person name="Dacheux D."/>
            <person name="Elliott J.M."/>
            <person name="Derbise A."/>
            <person name="Hauser L.J."/>
            <person name="Garcia E."/>
        </authorList>
    </citation>
    <scope>NUCLEOTIDE SEQUENCE [LARGE SCALE GENOMIC DNA]</scope>
    <source>
        <strain>IP32953</strain>
    </source>
</reference>
<protein>
    <recommendedName>
        <fullName evidence="1">Serine/threonine transporter SstT</fullName>
    </recommendedName>
    <alternativeName>
        <fullName evidence="1">Na(+)/serine-threonine symporter</fullName>
    </alternativeName>
</protein>
<sequence length="418" mass="43202">MEKTQSVFIRFIVNGSLVKQILIGLVAGIVLALVSTPAAIAVGLLGSLFVGALKAVAPVLVLMLVIASIANHKKGQKTSIRPILFLYVLGTFSAALVAVVVSFIYPSTLILVAESADITPPSGIVEVLHGLLNSIIANPIHALLNANYIGILAWAVGLGIALRHAADTTKALINDMSDAVTLVVRVVIRFAPLGIFGLVASTIAATGFGALQLYAQLLVVLIGCMLLVALVVNPLIVYWKIRRNPYPLVFACLRESGVTAFFTRSSAANIPVNMEMCKKMNLNEDTYSISIPLGATINMAGAAITITVLTLAAVHTLGITVDLPTALLLSVVAAICACGASGVAGGSLLLIPLACSMFGIPNDVAMQVVGVGFIIGVLQDSAETALNSSTDVLFTAAVCQAEDAKLANPDPLAAGKSV</sequence>
<organism>
    <name type="scientific">Yersinia pseudotuberculosis serotype I (strain IP32953)</name>
    <dbReference type="NCBI Taxonomy" id="273123"/>
    <lineage>
        <taxon>Bacteria</taxon>
        <taxon>Pseudomonadati</taxon>
        <taxon>Pseudomonadota</taxon>
        <taxon>Gammaproteobacteria</taxon>
        <taxon>Enterobacterales</taxon>
        <taxon>Yersiniaceae</taxon>
        <taxon>Yersinia</taxon>
    </lineage>
</organism>
<keyword id="KW-0029">Amino-acid transport</keyword>
<keyword id="KW-0997">Cell inner membrane</keyword>
<keyword id="KW-1003">Cell membrane</keyword>
<keyword id="KW-0472">Membrane</keyword>
<keyword id="KW-0769">Symport</keyword>
<keyword id="KW-0812">Transmembrane</keyword>
<keyword id="KW-1133">Transmembrane helix</keyword>
<keyword id="KW-0813">Transport</keyword>
<name>SSTT_YERPS</name>
<feature type="chain" id="PRO_0000309162" description="Serine/threonine transporter SstT">
    <location>
        <begin position="1"/>
        <end position="418"/>
    </location>
</feature>
<feature type="transmembrane region" description="Helical" evidence="1">
    <location>
        <begin position="21"/>
        <end position="41"/>
    </location>
</feature>
<feature type="transmembrane region" description="Helical" evidence="1">
    <location>
        <begin position="49"/>
        <end position="69"/>
    </location>
</feature>
<feature type="transmembrane region" description="Helical" evidence="1">
    <location>
        <begin position="83"/>
        <end position="103"/>
    </location>
</feature>
<feature type="transmembrane region" description="Helical" evidence="1">
    <location>
        <begin position="142"/>
        <end position="162"/>
    </location>
</feature>
<feature type="transmembrane region" description="Helical" evidence="1">
    <location>
        <begin position="190"/>
        <end position="210"/>
    </location>
</feature>
<feature type="transmembrane region" description="Helical" evidence="1">
    <location>
        <begin position="217"/>
        <end position="237"/>
    </location>
</feature>
<feature type="transmembrane region" description="Helical" evidence="1">
    <location>
        <begin position="299"/>
        <end position="319"/>
    </location>
</feature>
<feature type="transmembrane region" description="Helical" evidence="1">
    <location>
        <begin position="331"/>
        <end position="351"/>
    </location>
</feature>
<dbReference type="EMBL" id="BX936398">
    <property type="protein sequence ID" value="CAH22712.1"/>
    <property type="molecule type" value="Genomic_DNA"/>
</dbReference>
<dbReference type="RefSeq" id="WP_002216063.1">
    <property type="nucleotide sequence ID" value="NZ_CP009712.1"/>
</dbReference>
<dbReference type="SMR" id="Q665P2"/>
<dbReference type="GeneID" id="57974032"/>
<dbReference type="KEGG" id="ypo:BZ17_3128"/>
<dbReference type="KEGG" id="yps:YPTB3474"/>
<dbReference type="PATRIC" id="fig|273123.14.peg.3280"/>
<dbReference type="Proteomes" id="UP000001011">
    <property type="component" value="Chromosome"/>
</dbReference>
<dbReference type="GO" id="GO:0005886">
    <property type="term" value="C:plasma membrane"/>
    <property type="evidence" value="ECO:0007669"/>
    <property type="project" value="UniProtKB-SubCell"/>
</dbReference>
<dbReference type="GO" id="GO:0005295">
    <property type="term" value="F:neutral L-amino acid:sodium symporter activity"/>
    <property type="evidence" value="ECO:0007669"/>
    <property type="project" value="TreeGrafter"/>
</dbReference>
<dbReference type="GO" id="GO:0032329">
    <property type="term" value="P:serine transport"/>
    <property type="evidence" value="ECO:0007669"/>
    <property type="project" value="InterPro"/>
</dbReference>
<dbReference type="GO" id="GO:0015826">
    <property type="term" value="P:threonine transport"/>
    <property type="evidence" value="ECO:0007669"/>
    <property type="project" value="InterPro"/>
</dbReference>
<dbReference type="FunFam" id="1.10.3860.10:FF:000003">
    <property type="entry name" value="Serine/threonine transporter sstT"/>
    <property type="match status" value="1"/>
</dbReference>
<dbReference type="Gene3D" id="1.10.3860.10">
    <property type="entry name" value="Sodium:dicarboxylate symporter"/>
    <property type="match status" value="1"/>
</dbReference>
<dbReference type="HAMAP" id="MF_01582">
    <property type="entry name" value="Ser_Thr_transp_SstT"/>
    <property type="match status" value="1"/>
</dbReference>
<dbReference type="InterPro" id="IPR001991">
    <property type="entry name" value="Na-dicarboxylate_symporter"/>
</dbReference>
<dbReference type="InterPro" id="IPR036458">
    <property type="entry name" value="Na:dicarbo_symporter_sf"/>
</dbReference>
<dbReference type="InterPro" id="IPR023025">
    <property type="entry name" value="Ser_Thr_transp_SstT"/>
</dbReference>
<dbReference type="NCBIfam" id="NF010151">
    <property type="entry name" value="PRK13628.1"/>
    <property type="match status" value="1"/>
</dbReference>
<dbReference type="PANTHER" id="PTHR42865">
    <property type="entry name" value="PROTON/GLUTAMATE-ASPARTATE SYMPORTER"/>
    <property type="match status" value="1"/>
</dbReference>
<dbReference type="PANTHER" id="PTHR42865:SF8">
    <property type="entry name" value="SERINE_THREONINE TRANSPORTER SSTT"/>
    <property type="match status" value="1"/>
</dbReference>
<dbReference type="Pfam" id="PF00375">
    <property type="entry name" value="SDF"/>
    <property type="match status" value="1"/>
</dbReference>
<dbReference type="PRINTS" id="PR00173">
    <property type="entry name" value="EDTRNSPORT"/>
</dbReference>
<dbReference type="SUPFAM" id="SSF118215">
    <property type="entry name" value="Proton glutamate symport protein"/>
    <property type="match status" value="1"/>
</dbReference>
<proteinExistence type="inferred from homology"/>
<accession>Q665P2</accession>
<gene>
    <name evidence="1" type="primary">sstT</name>
    <name type="ordered locus">YPTB3474</name>
</gene>